<protein>
    <recommendedName>
        <fullName>Probable acyl-activating enzyme 9</fullName>
        <ecNumber>6.2.1.-</ecNumber>
    </recommendedName>
    <alternativeName>
        <fullName>AMP-binding protein 9</fullName>
        <shortName>AtAMPBP9</shortName>
    </alternativeName>
</protein>
<comment type="function">
    <text evidence="1">May act as an acid--thiol ligase that activates carboxylic acids by forming acyl-CoAs.</text>
</comment>
<comment type="tissue specificity">
    <text evidence="2">Expressed in leaves, flowers and developing seeds.</text>
</comment>
<comment type="similarity">
    <text evidence="3">Belongs to the ATP-dependent AMP-binding enzyme family.</text>
</comment>
<organism>
    <name type="scientific">Arabidopsis thaliana</name>
    <name type="common">Mouse-ear cress</name>
    <dbReference type="NCBI Taxonomy" id="3702"/>
    <lineage>
        <taxon>Eukaryota</taxon>
        <taxon>Viridiplantae</taxon>
        <taxon>Streptophyta</taxon>
        <taxon>Embryophyta</taxon>
        <taxon>Tracheophyta</taxon>
        <taxon>Spermatophyta</taxon>
        <taxon>Magnoliopsida</taxon>
        <taxon>eudicotyledons</taxon>
        <taxon>Gunneridae</taxon>
        <taxon>Pentapetalae</taxon>
        <taxon>rosids</taxon>
        <taxon>malvids</taxon>
        <taxon>Brassicales</taxon>
        <taxon>Brassicaceae</taxon>
        <taxon>Camelineae</taxon>
        <taxon>Arabidopsis</taxon>
    </lineage>
</organism>
<evidence type="ECO:0000250" key="1"/>
<evidence type="ECO:0000269" key="2">
    <source>
    </source>
</evidence>
<evidence type="ECO:0000305" key="3"/>
<name>AEE9_ARATH</name>
<feature type="chain" id="PRO_0000415720" description="Probable acyl-activating enzyme 9">
    <location>
        <begin position="1"/>
        <end position="550"/>
    </location>
</feature>
<sequence>MELLLPHPSNSTPLTVLGFLDRAASVYGDCPSILHTTNTVHTWSETHNRCLRIASALTSSSLGINRGQVVSVVGPNVPSVYELQFAVPMSGAILNNINPRLDAHALSVLLRHSESKLVFVDPNSISVVLEAVSFMRQNEKPHLVLLDDDQEDGSLSPSAASDFLDTYQGVMERGDSRFKWIRPQTEWQPMILNYTSGTTSSPKGVVLSHRAIFMLTVSSLLDWHFPNRPVYLWTLPMFHANGWGYTWGTAAVGATNVCTRRVDAPTIYDLIDKHHVTHMCAAPMVLNMLTNYPSRKPLKNPVQVMTAGAPPPAAIISRAETLGFNVGHGYGLTETGGPVVSCAWKAEWDHLDPLERARLKSRQGVRTIGFAEVDVRDPRTGKSVEHDGVSVGEIVLKGGSVMLGYYKDPEGTAACMREDGWFYSGDVGVIHEDGYLEVKDRSKDVIICGGENISSAEVETVLYTNPVVKEAAVVAKPDKMWGETPCAFVSLKYDSNGNGLVTEREIREFCKTRLPKYMVPRKVIFQEELPKTSTGKIQKFLLRQMAKSLP</sequence>
<reference key="1">
    <citation type="journal article" date="2002" name="Plant Physiol.">
        <title>Arabidopsis contains nine long-chain acyl-coenzyme A synthetase genes that participate in fatty acid and glycerolipid metabolism.</title>
        <authorList>
            <person name="Shockey J.M."/>
            <person name="Fulda M.S."/>
            <person name="Browse J.A."/>
        </authorList>
    </citation>
    <scope>NUCLEOTIDE SEQUENCE [MRNA]</scope>
</reference>
<reference key="2">
    <citation type="journal article" date="2000" name="Nature">
        <title>Sequence and analysis of chromosome 1 of the plant Arabidopsis thaliana.</title>
        <authorList>
            <person name="Theologis A."/>
            <person name="Ecker J.R."/>
            <person name="Palm C.J."/>
            <person name="Federspiel N.A."/>
            <person name="Kaul S."/>
            <person name="White O."/>
            <person name="Alonso J."/>
            <person name="Altafi H."/>
            <person name="Araujo R."/>
            <person name="Bowman C.L."/>
            <person name="Brooks S.Y."/>
            <person name="Buehler E."/>
            <person name="Chan A."/>
            <person name="Chao Q."/>
            <person name="Chen H."/>
            <person name="Cheuk R.F."/>
            <person name="Chin C.W."/>
            <person name="Chung M.K."/>
            <person name="Conn L."/>
            <person name="Conway A.B."/>
            <person name="Conway A.R."/>
            <person name="Creasy T.H."/>
            <person name="Dewar K."/>
            <person name="Dunn P."/>
            <person name="Etgu P."/>
            <person name="Feldblyum T.V."/>
            <person name="Feng J.-D."/>
            <person name="Fong B."/>
            <person name="Fujii C.Y."/>
            <person name="Gill J.E."/>
            <person name="Goldsmith A.D."/>
            <person name="Haas B."/>
            <person name="Hansen N.F."/>
            <person name="Hughes B."/>
            <person name="Huizar L."/>
            <person name="Hunter J.L."/>
            <person name="Jenkins J."/>
            <person name="Johnson-Hopson C."/>
            <person name="Khan S."/>
            <person name="Khaykin E."/>
            <person name="Kim C.J."/>
            <person name="Koo H.L."/>
            <person name="Kremenetskaia I."/>
            <person name="Kurtz D.B."/>
            <person name="Kwan A."/>
            <person name="Lam B."/>
            <person name="Langin-Hooper S."/>
            <person name="Lee A."/>
            <person name="Lee J.M."/>
            <person name="Lenz C.A."/>
            <person name="Li J.H."/>
            <person name="Li Y.-P."/>
            <person name="Lin X."/>
            <person name="Liu S.X."/>
            <person name="Liu Z.A."/>
            <person name="Luros J.S."/>
            <person name="Maiti R."/>
            <person name="Marziali A."/>
            <person name="Militscher J."/>
            <person name="Miranda M."/>
            <person name="Nguyen M."/>
            <person name="Nierman W.C."/>
            <person name="Osborne B.I."/>
            <person name="Pai G."/>
            <person name="Peterson J."/>
            <person name="Pham P.K."/>
            <person name="Rizzo M."/>
            <person name="Rooney T."/>
            <person name="Rowley D."/>
            <person name="Sakano H."/>
            <person name="Salzberg S.L."/>
            <person name="Schwartz J.R."/>
            <person name="Shinn P."/>
            <person name="Southwick A.M."/>
            <person name="Sun H."/>
            <person name="Tallon L.J."/>
            <person name="Tambunga G."/>
            <person name="Toriumi M.J."/>
            <person name="Town C.D."/>
            <person name="Utterback T."/>
            <person name="Van Aken S."/>
            <person name="Vaysberg M."/>
            <person name="Vysotskaia V.S."/>
            <person name="Walker M."/>
            <person name="Wu D."/>
            <person name="Yu G."/>
            <person name="Fraser C.M."/>
            <person name="Venter J.C."/>
            <person name="Davis R.W."/>
        </authorList>
    </citation>
    <scope>NUCLEOTIDE SEQUENCE [LARGE SCALE GENOMIC DNA]</scope>
    <source>
        <strain>cv. Columbia</strain>
    </source>
</reference>
<reference key="3">
    <citation type="journal article" date="2017" name="Plant J.">
        <title>Araport11: a complete reannotation of the Arabidopsis thaliana reference genome.</title>
        <authorList>
            <person name="Cheng C.Y."/>
            <person name="Krishnakumar V."/>
            <person name="Chan A.P."/>
            <person name="Thibaud-Nissen F."/>
            <person name="Schobel S."/>
            <person name="Town C.D."/>
        </authorList>
    </citation>
    <scope>GENOME REANNOTATION</scope>
    <source>
        <strain>cv. Columbia</strain>
    </source>
</reference>
<reference key="4">
    <citation type="journal article" date="2003" name="Science">
        <title>Empirical analysis of transcriptional activity in the Arabidopsis genome.</title>
        <authorList>
            <person name="Yamada K."/>
            <person name="Lim J."/>
            <person name="Dale J.M."/>
            <person name="Chen H."/>
            <person name="Shinn P."/>
            <person name="Palm C.J."/>
            <person name="Southwick A.M."/>
            <person name="Wu H.C."/>
            <person name="Kim C.J."/>
            <person name="Nguyen M."/>
            <person name="Pham P.K."/>
            <person name="Cheuk R.F."/>
            <person name="Karlin-Newmann G."/>
            <person name="Liu S.X."/>
            <person name="Lam B."/>
            <person name="Sakano H."/>
            <person name="Wu T."/>
            <person name="Yu G."/>
            <person name="Miranda M."/>
            <person name="Quach H.L."/>
            <person name="Tripp M."/>
            <person name="Chang C.H."/>
            <person name="Lee J.M."/>
            <person name="Toriumi M.J."/>
            <person name="Chan M.M."/>
            <person name="Tang C.C."/>
            <person name="Onodera C.S."/>
            <person name="Deng J.M."/>
            <person name="Akiyama K."/>
            <person name="Ansari Y."/>
            <person name="Arakawa T."/>
            <person name="Banh J."/>
            <person name="Banno F."/>
            <person name="Bowser L."/>
            <person name="Brooks S.Y."/>
            <person name="Carninci P."/>
            <person name="Chao Q."/>
            <person name="Choy N."/>
            <person name="Enju A."/>
            <person name="Goldsmith A.D."/>
            <person name="Gurjal M."/>
            <person name="Hansen N.F."/>
            <person name="Hayashizaki Y."/>
            <person name="Johnson-Hopson C."/>
            <person name="Hsuan V.W."/>
            <person name="Iida K."/>
            <person name="Karnes M."/>
            <person name="Khan S."/>
            <person name="Koesema E."/>
            <person name="Ishida J."/>
            <person name="Jiang P.X."/>
            <person name="Jones T."/>
            <person name="Kawai J."/>
            <person name="Kamiya A."/>
            <person name="Meyers C."/>
            <person name="Nakajima M."/>
            <person name="Narusaka M."/>
            <person name="Seki M."/>
            <person name="Sakurai T."/>
            <person name="Satou M."/>
            <person name="Tamse R."/>
            <person name="Vaysberg M."/>
            <person name="Wallender E.K."/>
            <person name="Wong C."/>
            <person name="Yamamura Y."/>
            <person name="Yuan S."/>
            <person name="Shinozaki K."/>
            <person name="Davis R.W."/>
            <person name="Theologis A."/>
            <person name="Ecker J.R."/>
        </authorList>
    </citation>
    <scope>NUCLEOTIDE SEQUENCE [LARGE SCALE MRNA]</scope>
    <source>
        <strain>cv. Columbia</strain>
    </source>
</reference>
<reference key="5">
    <citation type="journal article" date="2003" name="Plant Physiol.">
        <title>Arabidopsis contains a large superfamily of acyl-activating enzymes. Phylogenetic and biochemical analysis reveals a new class of acyl-coenzyme a synthetases.</title>
        <authorList>
            <person name="Shockey J.M."/>
            <person name="Fulda M.S."/>
            <person name="Browse J."/>
        </authorList>
    </citation>
    <scope>TISSUE SPECIFICITY</scope>
    <scope>GENE FAMILY</scope>
    <scope>NOMENCLATURE</scope>
</reference>
<gene>
    <name type="primary">AEE9</name>
    <name type="synonym">AMPBP9</name>
    <name type="ordered locus">At1g21540</name>
    <name type="ORF">F24J8.1</name>
</gene>
<dbReference type="EC" id="6.2.1.-"/>
<dbReference type="EMBL" id="AF503768">
    <property type="protein sequence ID" value="AAM28626.1"/>
    <property type="molecule type" value="mRNA"/>
</dbReference>
<dbReference type="EMBL" id="AC015447">
    <property type="protein sequence ID" value="AAF87900.1"/>
    <property type="molecule type" value="Genomic_DNA"/>
</dbReference>
<dbReference type="EMBL" id="CP002684">
    <property type="protein sequence ID" value="AEE30115.1"/>
    <property type="molecule type" value="Genomic_DNA"/>
</dbReference>
<dbReference type="EMBL" id="AY072217">
    <property type="protein sequence ID" value="AAL60038.1"/>
    <property type="molecule type" value="mRNA"/>
</dbReference>
<dbReference type="EMBL" id="AY133859">
    <property type="protein sequence ID" value="AAM91793.1"/>
    <property type="molecule type" value="mRNA"/>
</dbReference>
<dbReference type="PIR" id="C86348">
    <property type="entry name" value="C86348"/>
</dbReference>
<dbReference type="RefSeq" id="NP_173573.1">
    <property type="nucleotide sequence ID" value="NM_102003.4"/>
</dbReference>
<dbReference type="SMR" id="Q9LPK6"/>
<dbReference type="FunCoup" id="Q9LPK6">
    <property type="interactions" value="107"/>
</dbReference>
<dbReference type="STRING" id="3702.Q9LPK6"/>
<dbReference type="PaxDb" id="3702-AT1G21540.1"/>
<dbReference type="ProteomicsDB" id="244656"/>
<dbReference type="EnsemblPlants" id="AT1G21540.1">
    <property type="protein sequence ID" value="AT1G21540.1"/>
    <property type="gene ID" value="AT1G21540"/>
</dbReference>
<dbReference type="GeneID" id="838755"/>
<dbReference type="Gramene" id="AT1G21540.1">
    <property type="protein sequence ID" value="AT1G21540.1"/>
    <property type="gene ID" value="AT1G21540"/>
</dbReference>
<dbReference type="KEGG" id="ath:AT1G21540"/>
<dbReference type="Araport" id="AT1G21540"/>
<dbReference type="TAIR" id="AT1G21540"/>
<dbReference type="eggNOG" id="KOG1176">
    <property type="taxonomic scope" value="Eukaryota"/>
</dbReference>
<dbReference type="HOGENOM" id="CLU_000022_59_5_1"/>
<dbReference type="InParanoid" id="Q9LPK6"/>
<dbReference type="OMA" id="YATIDRH"/>
<dbReference type="OrthoDB" id="10253115at2759"/>
<dbReference type="PhylomeDB" id="Q9LPK6"/>
<dbReference type="BioCyc" id="ARA:AT1G21540-MONOMER"/>
<dbReference type="PRO" id="PR:Q9LPK6"/>
<dbReference type="Proteomes" id="UP000006548">
    <property type="component" value="Chromosome 1"/>
</dbReference>
<dbReference type="ExpressionAtlas" id="Q9LPK6">
    <property type="expression patterns" value="baseline and differential"/>
</dbReference>
<dbReference type="GO" id="GO:0016874">
    <property type="term" value="F:ligase activity"/>
    <property type="evidence" value="ECO:0007669"/>
    <property type="project" value="UniProtKB-KW"/>
</dbReference>
<dbReference type="GO" id="GO:0006631">
    <property type="term" value="P:fatty acid metabolic process"/>
    <property type="evidence" value="ECO:0007669"/>
    <property type="project" value="UniProtKB-KW"/>
</dbReference>
<dbReference type="CDD" id="cd12118">
    <property type="entry name" value="ttLC_FACS_AEE21_like"/>
    <property type="match status" value="1"/>
</dbReference>
<dbReference type="FunFam" id="3.30.300.30:FF:000008">
    <property type="entry name" value="2,3-dihydroxybenzoate-AMP ligase"/>
    <property type="match status" value="1"/>
</dbReference>
<dbReference type="FunFam" id="3.40.50.12780:FF:000003">
    <property type="entry name" value="Long-chain-fatty-acid--CoA ligase FadD"/>
    <property type="match status" value="1"/>
</dbReference>
<dbReference type="Gene3D" id="3.30.300.30">
    <property type="match status" value="1"/>
</dbReference>
<dbReference type="Gene3D" id="3.40.50.12780">
    <property type="entry name" value="N-terminal domain of ligase-like"/>
    <property type="match status" value="1"/>
</dbReference>
<dbReference type="InterPro" id="IPR025110">
    <property type="entry name" value="AMP-bd_C"/>
</dbReference>
<dbReference type="InterPro" id="IPR045851">
    <property type="entry name" value="AMP-bd_C_sf"/>
</dbReference>
<dbReference type="InterPro" id="IPR020845">
    <property type="entry name" value="AMP-binding_CS"/>
</dbReference>
<dbReference type="InterPro" id="IPR000873">
    <property type="entry name" value="AMP-dep_synth/lig_dom"/>
</dbReference>
<dbReference type="InterPro" id="IPR042099">
    <property type="entry name" value="ANL_N_sf"/>
</dbReference>
<dbReference type="InterPro" id="IPR018247">
    <property type="entry name" value="EF_Hand_1_Ca_BS"/>
</dbReference>
<dbReference type="PANTHER" id="PTHR43859">
    <property type="entry name" value="ACYL-ACTIVATING ENZYME"/>
    <property type="match status" value="1"/>
</dbReference>
<dbReference type="PANTHER" id="PTHR43859:SF28">
    <property type="entry name" value="ACYL-ACTIVATING ENZYME 10-RELATED"/>
    <property type="match status" value="1"/>
</dbReference>
<dbReference type="Pfam" id="PF00501">
    <property type="entry name" value="AMP-binding"/>
    <property type="match status" value="1"/>
</dbReference>
<dbReference type="Pfam" id="PF13193">
    <property type="entry name" value="AMP-binding_C"/>
    <property type="match status" value="1"/>
</dbReference>
<dbReference type="SUPFAM" id="SSF56801">
    <property type="entry name" value="Acetyl-CoA synthetase-like"/>
    <property type="match status" value="1"/>
</dbReference>
<dbReference type="PROSITE" id="PS00455">
    <property type="entry name" value="AMP_BINDING"/>
    <property type="match status" value="1"/>
</dbReference>
<dbReference type="PROSITE" id="PS00018">
    <property type="entry name" value="EF_HAND_1"/>
    <property type="match status" value="1"/>
</dbReference>
<keyword id="KW-0276">Fatty acid metabolism</keyword>
<keyword id="KW-0436">Ligase</keyword>
<keyword id="KW-0443">Lipid metabolism</keyword>
<keyword id="KW-1185">Reference proteome</keyword>
<accession>Q9LPK6</accession>
<proteinExistence type="evidence at transcript level"/>